<sequence length="49" mass="5901">MRVNITLACTECGERNYISKKNKRNNPDRVEFKKYCPRDKKSTLHRETK</sequence>
<feature type="chain" id="PRO_0000170138" description="Large ribosomal subunit protein bL33A">
    <location>
        <begin position="1"/>
        <end position="49"/>
    </location>
</feature>
<feature type="region of interest" description="Disordered" evidence="2">
    <location>
        <begin position="20"/>
        <end position="49"/>
    </location>
</feature>
<feature type="compositionally biased region" description="Basic and acidic residues" evidence="2">
    <location>
        <begin position="25"/>
        <end position="49"/>
    </location>
</feature>
<feature type="sequence conflict" description="In Ref. 1; D84432." evidence="4" ref="1">
    <original>G</original>
    <variation>R</variation>
    <location>
        <position position="13"/>
    </location>
</feature>
<feature type="sequence conflict" description="In Ref. 1; D84432." evidence="4" ref="1">
    <original>N</original>
    <variation>T</variation>
    <location>
        <position position="22"/>
    </location>
</feature>
<feature type="strand" evidence="7">
    <location>
        <begin position="2"/>
        <end position="9"/>
    </location>
</feature>
<feature type="turn" evidence="7">
    <location>
        <begin position="10"/>
        <end position="12"/>
    </location>
</feature>
<feature type="strand" evidence="7">
    <location>
        <begin position="15"/>
        <end position="22"/>
    </location>
</feature>
<feature type="turn" evidence="7">
    <location>
        <begin position="23"/>
        <end position="25"/>
    </location>
</feature>
<feature type="strand" evidence="7">
    <location>
        <begin position="31"/>
        <end position="36"/>
    </location>
</feature>
<feature type="turn" evidence="7">
    <location>
        <begin position="37"/>
        <end position="40"/>
    </location>
</feature>
<feature type="strand" evidence="7">
    <location>
        <begin position="41"/>
        <end position="47"/>
    </location>
</feature>
<accession>P56849</accession>
<comment type="subunit">
    <text evidence="3">Part of the 50S ribosomal subunit (PubMed:30126986). Interacts with VmlR (PubMed:30126986).</text>
</comment>
<comment type="similarity">
    <text evidence="1">Belongs to the bacterial ribosomal protein bL33 family.</text>
</comment>
<proteinExistence type="evidence at protein level"/>
<keyword id="KW-0002">3D-structure</keyword>
<keyword id="KW-1185">Reference proteome</keyword>
<keyword id="KW-0687">Ribonucleoprotein</keyword>
<keyword id="KW-0689">Ribosomal protein</keyword>
<reference key="1">
    <citation type="journal article" date="1996" name="Microbiology">
        <title>Systematic sequencing of the 283 kb 210 degrees-232 degrees region of the Bacillus subtilis genome containing the skin element and many sporulation genes.</title>
        <authorList>
            <person name="Mizuno M."/>
            <person name="Masuda S."/>
            <person name="Takemaru K."/>
            <person name="Hosono S."/>
            <person name="Sato T."/>
            <person name="Takeuchi M."/>
            <person name="Kobayashi Y."/>
        </authorList>
    </citation>
    <scope>NUCLEOTIDE SEQUENCE [GENOMIC DNA]</scope>
    <source>
        <strain>168 / JH642</strain>
    </source>
</reference>
<reference key="2">
    <citation type="journal article" date="1997" name="Nature">
        <title>The complete genome sequence of the Gram-positive bacterium Bacillus subtilis.</title>
        <authorList>
            <person name="Kunst F."/>
            <person name="Ogasawara N."/>
            <person name="Moszer I."/>
            <person name="Albertini A.M."/>
            <person name="Alloni G."/>
            <person name="Azevedo V."/>
            <person name="Bertero M.G."/>
            <person name="Bessieres P."/>
            <person name="Bolotin A."/>
            <person name="Borchert S."/>
            <person name="Borriss R."/>
            <person name="Boursier L."/>
            <person name="Brans A."/>
            <person name="Braun M."/>
            <person name="Brignell S.C."/>
            <person name="Bron S."/>
            <person name="Brouillet S."/>
            <person name="Bruschi C.V."/>
            <person name="Caldwell B."/>
            <person name="Capuano V."/>
            <person name="Carter N.M."/>
            <person name="Choi S.-K."/>
            <person name="Codani J.-J."/>
            <person name="Connerton I.F."/>
            <person name="Cummings N.J."/>
            <person name="Daniel R.A."/>
            <person name="Denizot F."/>
            <person name="Devine K.M."/>
            <person name="Duesterhoeft A."/>
            <person name="Ehrlich S.D."/>
            <person name="Emmerson P.T."/>
            <person name="Entian K.-D."/>
            <person name="Errington J."/>
            <person name="Fabret C."/>
            <person name="Ferrari E."/>
            <person name="Foulger D."/>
            <person name="Fritz C."/>
            <person name="Fujita M."/>
            <person name="Fujita Y."/>
            <person name="Fuma S."/>
            <person name="Galizzi A."/>
            <person name="Galleron N."/>
            <person name="Ghim S.-Y."/>
            <person name="Glaser P."/>
            <person name="Goffeau A."/>
            <person name="Golightly E.J."/>
            <person name="Grandi G."/>
            <person name="Guiseppi G."/>
            <person name="Guy B.J."/>
            <person name="Haga K."/>
            <person name="Haiech J."/>
            <person name="Harwood C.R."/>
            <person name="Henaut A."/>
            <person name="Hilbert H."/>
            <person name="Holsappel S."/>
            <person name="Hosono S."/>
            <person name="Hullo M.-F."/>
            <person name="Itaya M."/>
            <person name="Jones L.-M."/>
            <person name="Joris B."/>
            <person name="Karamata D."/>
            <person name="Kasahara Y."/>
            <person name="Klaerr-Blanchard M."/>
            <person name="Klein C."/>
            <person name="Kobayashi Y."/>
            <person name="Koetter P."/>
            <person name="Koningstein G."/>
            <person name="Krogh S."/>
            <person name="Kumano M."/>
            <person name="Kurita K."/>
            <person name="Lapidus A."/>
            <person name="Lardinois S."/>
            <person name="Lauber J."/>
            <person name="Lazarevic V."/>
            <person name="Lee S.-M."/>
            <person name="Levine A."/>
            <person name="Liu H."/>
            <person name="Masuda S."/>
            <person name="Mauel C."/>
            <person name="Medigue C."/>
            <person name="Medina N."/>
            <person name="Mellado R.P."/>
            <person name="Mizuno M."/>
            <person name="Moestl D."/>
            <person name="Nakai S."/>
            <person name="Noback M."/>
            <person name="Noone D."/>
            <person name="O'Reilly M."/>
            <person name="Ogawa K."/>
            <person name="Ogiwara A."/>
            <person name="Oudega B."/>
            <person name="Park S.-H."/>
            <person name="Parro V."/>
            <person name="Pohl T.M."/>
            <person name="Portetelle D."/>
            <person name="Porwollik S."/>
            <person name="Prescott A.M."/>
            <person name="Presecan E."/>
            <person name="Pujic P."/>
            <person name="Purnelle B."/>
            <person name="Rapoport G."/>
            <person name="Rey M."/>
            <person name="Reynolds S."/>
            <person name="Rieger M."/>
            <person name="Rivolta C."/>
            <person name="Rocha E."/>
            <person name="Roche B."/>
            <person name="Rose M."/>
            <person name="Sadaie Y."/>
            <person name="Sato T."/>
            <person name="Scanlan E."/>
            <person name="Schleich S."/>
            <person name="Schroeter R."/>
            <person name="Scoffone F."/>
            <person name="Sekiguchi J."/>
            <person name="Sekowska A."/>
            <person name="Seror S.J."/>
            <person name="Serror P."/>
            <person name="Shin B.-S."/>
            <person name="Soldo B."/>
            <person name="Sorokin A."/>
            <person name="Tacconi E."/>
            <person name="Takagi T."/>
            <person name="Takahashi H."/>
            <person name="Takemaru K."/>
            <person name="Takeuchi M."/>
            <person name="Tamakoshi A."/>
            <person name="Tanaka T."/>
            <person name="Terpstra P."/>
            <person name="Tognoni A."/>
            <person name="Tosato V."/>
            <person name="Uchiyama S."/>
            <person name="Vandenbol M."/>
            <person name="Vannier F."/>
            <person name="Vassarotti A."/>
            <person name="Viari A."/>
            <person name="Wambutt R."/>
            <person name="Wedler E."/>
            <person name="Wedler H."/>
            <person name="Weitzenegger T."/>
            <person name="Winters P."/>
            <person name="Wipat A."/>
            <person name="Yamamoto H."/>
            <person name="Yamane K."/>
            <person name="Yasumoto K."/>
            <person name="Yata K."/>
            <person name="Yoshida K."/>
            <person name="Yoshikawa H.-F."/>
            <person name="Zumstein E."/>
            <person name="Yoshikawa H."/>
            <person name="Danchin A."/>
        </authorList>
    </citation>
    <scope>NUCLEOTIDE SEQUENCE [LARGE SCALE GENOMIC DNA]</scope>
    <source>
        <strain>168</strain>
    </source>
</reference>
<reference key="3">
    <citation type="journal article" date="2009" name="Microbiology">
        <title>From a consortium sequence to a unified sequence: the Bacillus subtilis 168 reference genome a decade later.</title>
        <authorList>
            <person name="Barbe V."/>
            <person name="Cruveiller S."/>
            <person name="Kunst F."/>
            <person name="Lenoble P."/>
            <person name="Meurice G."/>
            <person name="Sekowska A."/>
            <person name="Vallenet D."/>
            <person name="Wang T."/>
            <person name="Moszer I."/>
            <person name="Medigue C."/>
            <person name="Danchin A."/>
        </authorList>
    </citation>
    <scope>SEQUENCE REVISION TO 13 AND 22</scope>
</reference>
<reference evidence="5 6" key="4">
    <citation type="journal article" date="2018" name="Proc. Natl. Acad. Sci. U.S.A.">
        <title>Structural basis for antibiotic resistance mediated by the Bacillus subtilis ABCF ATPase VmlR.</title>
        <authorList>
            <person name="Crowe-McAuliffe C."/>
            <person name="Graf M."/>
            <person name="Huter P."/>
            <person name="Takada H."/>
            <person name="Abdelshahid M."/>
            <person name="Novacek J."/>
            <person name="Murina V."/>
            <person name="Atkinson G.C."/>
            <person name="Hauryliuk V."/>
            <person name="Wilson D.N."/>
        </authorList>
    </citation>
    <scope>STRUCTURE BY ELECTRON MICROSCOPY (3.10 ANGSTROMS) OF 1-49 WITH AND WITHOUT VIRGINIAMYCIN M</scope>
    <scope>INTERACTION WITH VMLR</scope>
    <scope>SUBUNIT</scope>
</reference>
<evidence type="ECO:0000255" key="1">
    <source>
        <dbReference type="HAMAP-Rule" id="MF_00294"/>
    </source>
</evidence>
<evidence type="ECO:0000256" key="2">
    <source>
        <dbReference type="SAM" id="MobiDB-lite"/>
    </source>
</evidence>
<evidence type="ECO:0000269" key="3">
    <source>
    </source>
</evidence>
<evidence type="ECO:0000305" key="4"/>
<evidence type="ECO:0007744" key="5">
    <source>
        <dbReference type="PDB" id="6HA1"/>
    </source>
</evidence>
<evidence type="ECO:0007744" key="6">
    <source>
        <dbReference type="PDB" id="6HA8"/>
    </source>
</evidence>
<evidence type="ECO:0007829" key="7">
    <source>
        <dbReference type="PDB" id="8S1P"/>
    </source>
</evidence>
<dbReference type="EMBL" id="D84432">
    <property type="status" value="NOT_ANNOTATED_CDS"/>
    <property type="molecule type" value="Genomic_DNA"/>
</dbReference>
<dbReference type="EMBL" id="AL009126">
    <property type="protein sequence ID" value="CAE01461.2"/>
    <property type="molecule type" value="Genomic_DNA"/>
</dbReference>
<dbReference type="RefSeq" id="NP_570908.2">
    <property type="nucleotide sequence ID" value="NC_000964.3"/>
</dbReference>
<dbReference type="PDB" id="3J9W">
    <property type="method" value="EM"/>
    <property type="resolution" value="3.90 A"/>
    <property type="chains" value="B5=1-49"/>
</dbReference>
<dbReference type="PDB" id="5NJT">
    <property type="method" value="EM"/>
    <property type="resolution" value="3.80 A"/>
    <property type="chains" value="q=1-48"/>
</dbReference>
<dbReference type="PDB" id="6HA1">
    <property type="method" value="EM"/>
    <property type="resolution" value="3.10 A"/>
    <property type="chains" value="1=1-49"/>
</dbReference>
<dbReference type="PDB" id="6HA8">
    <property type="method" value="EM"/>
    <property type="resolution" value="3.50 A"/>
    <property type="chains" value="1=1-49"/>
</dbReference>
<dbReference type="PDB" id="6HTQ">
    <property type="method" value="EM"/>
    <property type="resolution" value="4.50 A"/>
    <property type="chains" value="2=1-48"/>
</dbReference>
<dbReference type="PDB" id="6TNN">
    <property type="method" value="EM"/>
    <property type="resolution" value="3.07 A"/>
    <property type="chains" value="q=1-49"/>
</dbReference>
<dbReference type="PDB" id="6TPQ">
    <property type="method" value="EM"/>
    <property type="resolution" value="3.07 A"/>
    <property type="chains" value="q=1-49"/>
</dbReference>
<dbReference type="PDB" id="7AQC">
    <property type="method" value="EM"/>
    <property type="resolution" value="2.99 A"/>
    <property type="chains" value="c=1-49"/>
</dbReference>
<dbReference type="PDB" id="7AQD">
    <property type="method" value="EM"/>
    <property type="resolution" value="3.10 A"/>
    <property type="chains" value="c=1-49"/>
</dbReference>
<dbReference type="PDB" id="7AS8">
    <property type="method" value="EM"/>
    <property type="resolution" value="2.90 A"/>
    <property type="chains" value="g=1-49"/>
</dbReference>
<dbReference type="PDB" id="7AS9">
    <property type="method" value="EM"/>
    <property type="resolution" value="3.50 A"/>
    <property type="chains" value="g=1-49"/>
</dbReference>
<dbReference type="PDB" id="7O5B">
    <property type="method" value="EM"/>
    <property type="resolution" value="3.33 A"/>
    <property type="chains" value="1=1-49"/>
</dbReference>
<dbReference type="PDB" id="7OPE">
    <property type="method" value="EM"/>
    <property type="resolution" value="3.20 A"/>
    <property type="chains" value="g=1-49"/>
</dbReference>
<dbReference type="PDB" id="7QGU">
    <property type="method" value="EM"/>
    <property type="resolution" value="4.75 A"/>
    <property type="chains" value="c=1-49"/>
</dbReference>
<dbReference type="PDB" id="7QH4">
    <property type="method" value="EM"/>
    <property type="resolution" value="5.45 A"/>
    <property type="chains" value="c=1-49"/>
</dbReference>
<dbReference type="PDB" id="7QV1">
    <property type="method" value="EM"/>
    <property type="resolution" value="3.50 A"/>
    <property type="chains" value="1=1-49"/>
</dbReference>
<dbReference type="PDB" id="7QV2">
    <property type="method" value="EM"/>
    <property type="resolution" value="3.50 A"/>
    <property type="chains" value="1=1-49"/>
</dbReference>
<dbReference type="PDB" id="7QV3">
    <property type="method" value="EM"/>
    <property type="resolution" value="5.14 A"/>
    <property type="chains" value="1=1-49"/>
</dbReference>
<dbReference type="PDB" id="8BUU">
    <property type="method" value="EM"/>
    <property type="resolution" value="2.90 A"/>
    <property type="chains" value="1=1-49"/>
</dbReference>
<dbReference type="PDB" id="8QCQ">
    <property type="method" value="EM"/>
    <property type="resolution" value="2.30 A"/>
    <property type="chains" value="1=1-49"/>
</dbReference>
<dbReference type="PDB" id="8QPP">
    <property type="method" value="EM"/>
    <property type="resolution" value="3.40 A"/>
    <property type="chains" value="1=1-48"/>
</dbReference>
<dbReference type="PDB" id="8R55">
    <property type="method" value="EM"/>
    <property type="resolution" value="3.57 A"/>
    <property type="chains" value="1=1-48"/>
</dbReference>
<dbReference type="PDB" id="8S1P">
    <property type="method" value="EM"/>
    <property type="resolution" value="1.96 A"/>
    <property type="chains" value="1=1-49"/>
</dbReference>
<dbReference type="PDB" id="8S1U">
    <property type="method" value="EM"/>
    <property type="resolution" value="3.40 A"/>
    <property type="chains" value="1=1-49"/>
</dbReference>
<dbReference type="PDB" id="9BS0">
    <property type="method" value="EM"/>
    <property type="resolution" value="3.30 A"/>
    <property type="chains" value="Z=1-49"/>
</dbReference>
<dbReference type="PDBsum" id="3J9W"/>
<dbReference type="PDBsum" id="5NJT"/>
<dbReference type="PDBsum" id="6HA1"/>
<dbReference type="PDBsum" id="6HA8"/>
<dbReference type="PDBsum" id="6HTQ"/>
<dbReference type="PDBsum" id="6TNN"/>
<dbReference type="PDBsum" id="6TPQ"/>
<dbReference type="PDBsum" id="7AQC"/>
<dbReference type="PDBsum" id="7AQD"/>
<dbReference type="PDBsum" id="7AS8"/>
<dbReference type="PDBsum" id="7AS9"/>
<dbReference type="PDBsum" id="7O5B"/>
<dbReference type="PDBsum" id="7OPE"/>
<dbReference type="PDBsum" id="7QGU"/>
<dbReference type="PDBsum" id="7QH4"/>
<dbReference type="PDBsum" id="7QV1"/>
<dbReference type="PDBsum" id="7QV2"/>
<dbReference type="PDBsum" id="7QV3"/>
<dbReference type="PDBsum" id="8BUU"/>
<dbReference type="PDBsum" id="8QCQ"/>
<dbReference type="PDBsum" id="8QPP"/>
<dbReference type="PDBsum" id="8R55"/>
<dbReference type="PDBsum" id="8S1P"/>
<dbReference type="PDBsum" id="8S1U"/>
<dbReference type="PDBsum" id="9BS0"/>
<dbReference type="EMDB" id="EMD-0176"/>
<dbReference type="EMDB" id="EMD-0177"/>
<dbReference type="EMDB" id="EMD-0270"/>
<dbReference type="EMDB" id="EMD-10535"/>
<dbReference type="EMDB" id="EMD-10543"/>
<dbReference type="EMDB" id="EMD-11862"/>
<dbReference type="EMDB" id="EMD-11864"/>
<dbReference type="EMDB" id="EMD-11889"/>
<dbReference type="EMDB" id="EMD-11890"/>
<dbReference type="EMDB" id="EMD-12734"/>
<dbReference type="EMDB" id="EMD-13017"/>
<dbReference type="EMDB" id="EMD-14157"/>
<dbReference type="EMDB" id="EMD-14158"/>
<dbReference type="EMDB" id="EMD-14159"/>
<dbReference type="EMDB" id="EMD-16246"/>
<dbReference type="EMDB" id="EMD-18332"/>
<dbReference type="EMDB" id="EMD-19638"/>
<dbReference type="EMDB" id="EMD-19641"/>
<dbReference type="EMDB" id="EMD-3656"/>
<dbReference type="EMDB" id="EMD-44849"/>
<dbReference type="SMR" id="P56849"/>
<dbReference type="FunCoup" id="P56849">
    <property type="interactions" value="209"/>
</dbReference>
<dbReference type="STRING" id="224308.BSU24900"/>
<dbReference type="jPOST" id="P56849"/>
<dbReference type="PaxDb" id="224308-BSU24900"/>
<dbReference type="EnsemblBacteria" id="CAE01461">
    <property type="protein sequence ID" value="CAE01461"/>
    <property type="gene ID" value="BSU_24900"/>
</dbReference>
<dbReference type="GeneID" id="937959"/>
<dbReference type="KEGG" id="bsu:BSU24900"/>
<dbReference type="PATRIC" id="fig|224308.179.peg.2709"/>
<dbReference type="eggNOG" id="COG0267">
    <property type="taxonomic scope" value="Bacteria"/>
</dbReference>
<dbReference type="InParanoid" id="P56849"/>
<dbReference type="OrthoDB" id="197660at2"/>
<dbReference type="PhylomeDB" id="P56849"/>
<dbReference type="BioCyc" id="BSUB:BSU24900-MONOMER"/>
<dbReference type="PRO" id="PR:P56849"/>
<dbReference type="Proteomes" id="UP000001570">
    <property type="component" value="Chromosome"/>
</dbReference>
<dbReference type="GO" id="GO:0005737">
    <property type="term" value="C:cytoplasm"/>
    <property type="evidence" value="ECO:0007669"/>
    <property type="project" value="UniProtKB-ARBA"/>
</dbReference>
<dbReference type="GO" id="GO:1990904">
    <property type="term" value="C:ribonucleoprotein complex"/>
    <property type="evidence" value="ECO:0007669"/>
    <property type="project" value="UniProtKB-KW"/>
</dbReference>
<dbReference type="GO" id="GO:0005840">
    <property type="term" value="C:ribosome"/>
    <property type="evidence" value="ECO:0007669"/>
    <property type="project" value="UniProtKB-KW"/>
</dbReference>
<dbReference type="GO" id="GO:0003735">
    <property type="term" value="F:structural constituent of ribosome"/>
    <property type="evidence" value="ECO:0007669"/>
    <property type="project" value="InterPro"/>
</dbReference>
<dbReference type="GO" id="GO:0006412">
    <property type="term" value="P:translation"/>
    <property type="evidence" value="ECO:0007669"/>
    <property type="project" value="UniProtKB-UniRule"/>
</dbReference>
<dbReference type="Gene3D" id="2.20.28.120">
    <property type="entry name" value="Ribosomal protein L33"/>
    <property type="match status" value="1"/>
</dbReference>
<dbReference type="HAMAP" id="MF_00294">
    <property type="entry name" value="Ribosomal_bL33"/>
    <property type="match status" value="1"/>
</dbReference>
<dbReference type="InterPro" id="IPR001705">
    <property type="entry name" value="Ribosomal_bL33"/>
</dbReference>
<dbReference type="InterPro" id="IPR018264">
    <property type="entry name" value="Ribosomal_bL33_CS"/>
</dbReference>
<dbReference type="InterPro" id="IPR038584">
    <property type="entry name" value="Ribosomal_bL33_sf"/>
</dbReference>
<dbReference type="InterPro" id="IPR011332">
    <property type="entry name" value="Ribosomal_zn-bd"/>
</dbReference>
<dbReference type="NCBIfam" id="NF001764">
    <property type="entry name" value="PRK00504.1"/>
    <property type="match status" value="1"/>
</dbReference>
<dbReference type="NCBIfam" id="NF001860">
    <property type="entry name" value="PRK00595.1"/>
    <property type="match status" value="1"/>
</dbReference>
<dbReference type="NCBIfam" id="TIGR01023">
    <property type="entry name" value="rpmG_bact"/>
    <property type="match status" value="1"/>
</dbReference>
<dbReference type="PANTHER" id="PTHR43168">
    <property type="entry name" value="50S RIBOSOMAL PROTEIN L33, CHLOROPLASTIC"/>
    <property type="match status" value="1"/>
</dbReference>
<dbReference type="PANTHER" id="PTHR43168:SF2">
    <property type="entry name" value="LARGE RIBOSOMAL SUBUNIT PROTEIN BL33C"/>
    <property type="match status" value="1"/>
</dbReference>
<dbReference type="Pfam" id="PF00471">
    <property type="entry name" value="Ribosomal_L33"/>
    <property type="match status" value="1"/>
</dbReference>
<dbReference type="SUPFAM" id="SSF57829">
    <property type="entry name" value="Zn-binding ribosomal proteins"/>
    <property type="match status" value="1"/>
</dbReference>
<dbReference type="PROSITE" id="PS00582">
    <property type="entry name" value="RIBOSOMAL_L33"/>
    <property type="match status" value="1"/>
</dbReference>
<gene>
    <name type="primary">rpmGA</name>
    <name evidence="1" type="synonym">rpmG1</name>
    <name type="ordered locus">BSU24900</name>
</gene>
<name>RL331_BACSU</name>
<organism>
    <name type="scientific">Bacillus subtilis (strain 168)</name>
    <dbReference type="NCBI Taxonomy" id="224308"/>
    <lineage>
        <taxon>Bacteria</taxon>
        <taxon>Bacillati</taxon>
        <taxon>Bacillota</taxon>
        <taxon>Bacilli</taxon>
        <taxon>Bacillales</taxon>
        <taxon>Bacillaceae</taxon>
        <taxon>Bacillus</taxon>
    </lineage>
</organism>
<protein>
    <recommendedName>
        <fullName evidence="1">Large ribosomal subunit protein bL33A</fullName>
    </recommendedName>
    <alternativeName>
        <fullName>50S ribosomal protein L33 1</fullName>
    </alternativeName>
</protein>